<proteinExistence type="evidence at protein level"/>
<name>LPTB_ECOLI</name>
<comment type="function">
    <text evidence="3 4 5">Part of the ABC transporter complex LptBFG involved in the translocation of lipopolysaccharide (LPS) from the inner membrane to the outer membrane. Probably responsible for energy coupling to the transport system.</text>
</comment>
<comment type="subunit">
    <text evidence="6">Component of the lipopolysaccharide transport and assembly complex. The LptBFG transporter is composed of two ATP-binding proteins (LptB) and two transmembrane proteins (LptF and LptG).</text>
</comment>
<comment type="subcellular location">
    <subcellularLocation>
        <location evidence="2">Cytoplasm</location>
    </subcellularLocation>
    <subcellularLocation>
        <location evidence="2">Cell inner membrane</location>
        <topology evidence="2">Peripheral membrane protein</topology>
        <orientation evidence="2">Cytoplasmic side</orientation>
    </subcellularLocation>
</comment>
<comment type="induction">
    <text evidence="4">Transcriptionally regulated by sigma-E factor.</text>
</comment>
<comment type="disruption phenotype">
    <text evidence="3">Results in an earlier growth arrest and onset of cell lethality.</text>
</comment>
<comment type="similarity">
    <text evidence="8">Belongs to the ABC transporter superfamily. Outer membrane lipopolysaccharide export (TC 1.B.42) family.</text>
</comment>
<keyword id="KW-0002">3D-structure</keyword>
<keyword id="KW-0067">ATP-binding</keyword>
<keyword id="KW-0997">Cell inner membrane</keyword>
<keyword id="KW-1003">Cell membrane</keyword>
<keyword id="KW-0963">Cytoplasm</keyword>
<keyword id="KW-0903">Direct protein sequencing</keyword>
<keyword id="KW-0472">Membrane</keyword>
<keyword id="KW-0547">Nucleotide-binding</keyword>
<keyword id="KW-1185">Reference proteome</keyword>
<keyword id="KW-1278">Translocase</keyword>
<keyword id="KW-0813">Transport</keyword>
<feature type="initiator methionine" description="Removed" evidence="7">
    <location>
        <position position="1"/>
    </location>
</feature>
<feature type="chain" id="PRO_0000093178" description="Lipopolysaccharide export system ATP-binding protein LptB">
    <location>
        <begin position="2"/>
        <end position="241"/>
    </location>
</feature>
<feature type="domain" description="ABC transporter" evidence="1">
    <location>
        <begin position="4"/>
        <end position="237"/>
    </location>
</feature>
<feature type="binding site" evidence="1">
    <location>
        <begin position="36"/>
        <end position="43"/>
    </location>
    <ligand>
        <name>ATP</name>
        <dbReference type="ChEBI" id="CHEBI:30616"/>
    </ligand>
</feature>
<feature type="sequence conflict" description="In Ref. 1; AAB60162/BAA02314." evidence="8" ref="1">
    <original>RDA</original>
    <variation>ARC</variation>
    <location>
        <begin position="55"/>
        <end position="57"/>
    </location>
</feature>
<feature type="strand" evidence="9">
    <location>
        <begin position="3"/>
        <end position="13"/>
    </location>
</feature>
<feature type="strand" evidence="9">
    <location>
        <begin position="16"/>
        <end position="27"/>
    </location>
</feature>
<feature type="strand" evidence="9">
    <location>
        <begin position="31"/>
        <end position="35"/>
    </location>
</feature>
<feature type="helix" evidence="9">
    <location>
        <begin position="42"/>
        <end position="50"/>
    </location>
</feature>
<feature type="strand" evidence="9">
    <location>
        <begin position="56"/>
        <end position="62"/>
    </location>
</feature>
<feature type="helix" evidence="9">
    <location>
        <begin position="72"/>
        <end position="77"/>
    </location>
</feature>
<feature type="strand" evidence="9">
    <location>
        <begin position="80"/>
        <end position="83"/>
    </location>
</feature>
<feature type="strand" evidence="10">
    <location>
        <begin position="91"/>
        <end position="94"/>
    </location>
</feature>
<feature type="helix" evidence="9">
    <location>
        <begin position="95"/>
        <end position="103"/>
    </location>
</feature>
<feature type="helix" evidence="9">
    <location>
        <begin position="111"/>
        <end position="124"/>
    </location>
</feature>
<feature type="helix" evidence="9">
    <location>
        <begin position="128"/>
        <end position="130"/>
    </location>
</feature>
<feature type="helix" evidence="9">
    <location>
        <begin position="135"/>
        <end position="137"/>
    </location>
</feature>
<feature type="helix" evidence="9">
    <location>
        <begin position="140"/>
        <end position="152"/>
    </location>
</feature>
<feature type="strand" evidence="9">
    <location>
        <begin position="157"/>
        <end position="162"/>
    </location>
</feature>
<feature type="turn" evidence="9">
    <location>
        <begin position="164"/>
        <end position="167"/>
    </location>
</feature>
<feature type="helix" evidence="9">
    <location>
        <begin position="170"/>
        <end position="185"/>
    </location>
</feature>
<feature type="strand" evidence="9">
    <location>
        <begin position="189"/>
        <end position="195"/>
    </location>
</feature>
<feature type="helix" evidence="9">
    <location>
        <begin position="197"/>
        <end position="201"/>
    </location>
</feature>
<feature type="strand" evidence="9">
    <location>
        <begin position="205"/>
        <end position="211"/>
    </location>
</feature>
<feature type="strand" evidence="9">
    <location>
        <begin position="214"/>
        <end position="219"/>
    </location>
</feature>
<feature type="helix" evidence="9">
    <location>
        <begin position="221"/>
        <end position="225"/>
    </location>
</feature>
<feature type="helix" evidence="9">
    <location>
        <begin position="228"/>
        <end position="231"/>
    </location>
</feature>
<dbReference type="EC" id="7.5.2.-"/>
<dbReference type="EMBL" id="D12938">
    <property type="protein sequence ID" value="BAA02314.1"/>
    <property type="molecule type" value="Genomic_DNA"/>
</dbReference>
<dbReference type="EMBL" id="U12684">
    <property type="protein sequence ID" value="AAB60162.1"/>
    <property type="molecule type" value="Genomic_DNA"/>
</dbReference>
<dbReference type="EMBL" id="U18997">
    <property type="protein sequence ID" value="AAA58003.1"/>
    <property type="molecule type" value="Genomic_DNA"/>
</dbReference>
<dbReference type="EMBL" id="U00096">
    <property type="protein sequence ID" value="AAC76233.1"/>
    <property type="molecule type" value="Genomic_DNA"/>
</dbReference>
<dbReference type="EMBL" id="AP009048">
    <property type="protein sequence ID" value="BAE77245.1"/>
    <property type="molecule type" value="Genomic_DNA"/>
</dbReference>
<dbReference type="PIR" id="C65111">
    <property type="entry name" value="C65111"/>
</dbReference>
<dbReference type="RefSeq" id="NP_417668.1">
    <property type="nucleotide sequence ID" value="NC_000913.3"/>
</dbReference>
<dbReference type="RefSeq" id="WP_000224099.1">
    <property type="nucleotide sequence ID" value="NZ_STEB01000012.1"/>
</dbReference>
<dbReference type="PDB" id="4P31">
    <property type="method" value="X-ray"/>
    <property type="resolution" value="2.05 A"/>
    <property type="chains" value="A/B=2-241"/>
</dbReference>
<dbReference type="PDB" id="4P32">
    <property type="method" value="X-ray"/>
    <property type="resolution" value="1.55 A"/>
    <property type="chains" value="A/B=2-241"/>
</dbReference>
<dbReference type="PDB" id="4P33">
    <property type="method" value="X-ray"/>
    <property type="resolution" value="1.65 A"/>
    <property type="chains" value="A/B=2-241"/>
</dbReference>
<dbReference type="PDB" id="6B89">
    <property type="method" value="X-ray"/>
    <property type="resolution" value="2.00 A"/>
    <property type="chains" value="A/B=2-241"/>
</dbReference>
<dbReference type="PDB" id="6B8B">
    <property type="method" value="X-ray"/>
    <property type="resolution" value="1.95 A"/>
    <property type="chains" value="A=2-241"/>
</dbReference>
<dbReference type="PDB" id="6MBN">
    <property type="method" value="X-ray"/>
    <property type="resolution" value="1.96 A"/>
    <property type="chains" value="A/B=2-241"/>
</dbReference>
<dbReference type="PDB" id="6MGF">
    <property type="method" value="X-ray"/>
    <property type="resolution" value="2.98 A"/>
    <property type="chains" value="A=1-241"/>
</dbReference>
<dbReference type="PDB" id="6MHU">
    <property type="method" value="EM"/>
    <property type="resolution" value="4.00 A"/>
    <property type="chains" value="A/B=1-241"/>
</dbReference>
<dbReference type="PDB" id="6MHZ">
    <property type="method" value="EM"/>
    <property type="resolution" value="4.10 A"/>
    <property type="chains" value="A/B=1-241"/>
</dbReference>
<dbReference type="PDB" id="6MI7">
    <property type="method" value="EM"/>
    <property type="resolution" value="4.20 A"/>
    <property type="chains" value="A/B=1-241"/>
</dbReference>
<dbReference type="PDB" id="6MI8">
    <property type="method" value="EM"/>
    <property type="resolution" value="4.30 A"/>
    <property type="chains" value="A/B=1-241"/>
</dbReference>
<dbReference type="PDBsum" id="4P31"/>
<dbReference type="PDBsum" id="4P32"/>
<dbReference type="PDBsum" id="4P33"/>
<dbReference type="PDBsum" id="6B89"/>
<dbReference type="PDBsum" id="6B8B"/>
<dbReference type="PDBsum" id="6MBN"/>
<dbReference type="PDBsum" id="6MGF"/>
<dbReference type="PDBsum" id="6MHU"/>
<dbReference type="PDBsum" id="6MHZ"/>
<dbReference type="PDBsum" id="6MI7"/>
<dbReference type="PDBsum" id="6MI8"/>
<dbReference type="EMDB" id="EMD-9118"/>
<dbReference type="EMDB" id="EMD-9124"/>
<dbReference type="EMDB" id="EMD-9125"/>
<dbReference type="EMDB" id="EMD-9126"/>
<dbReference type="SMR" id="P0A9V1"/>
<dbReference type="ComplexPortal" id="CPX-3861">
    <property type="entry name" value="lptBFG LPS ABC transporter complex"/>
</dbReference>
<dbReference type="DIP" id="DIP-31876N"/>
<dbReference type="FunCoup" id="P0A9V1">
    <property type="interactions" value="342"/>
</dbReference>
<dbReference type="IntAct" id="P0A9V1">
    <property type="interactions" value="5"/>
</dbReference>
<dbReference type="MINT" id="P0A9V1"/>
<dbReference type="STRING" id="511145.b3201"/>
<dbReference type="TCDB" id="1.B.42.1.2">
    <property type="family name" value="the outer membrane lipopolysaccharide export porin (lps-ep) family"/>
</dbReference>
<dbReference type="jPOST" id="P0A9V1"/>
<dbReference type="PaxDb" id="511145-b3201"/>
<dbReference type="EnsemblBacteria" id="AAC76233">
    <property type="protein sequence ID" value="AAC76233"/>
    <property type="gene ID" value="b3201"/>
</dbReference>
<dbReference type="GeneID" id="93778780"/>
<dbReference type="GeneID" id="947725"/>
<dbReference type="KEGG" id="ecj:JW3168"/>
<dbReference type="KEGG" id="eco:b3201"/>
<dbReference type="KEGG" id="ecoc:C3026_17420"/>
<dbReference type="PATRIC" id="fig|1411691.4.peg.3530"/>
<dbReference type="EchoBASE" id="EB1631"/>
<dbReference type="eggNOG" id="COG1137">
    <property type="taxonomic scope" value="Bacteria"/>
</dbReference>
<dbReference type="HOGENOM" id="CLU_000604_1_2_6"/>
<dbReference type="InParanoid" id="P0A9V1"/>
<dbReference type="OMA" id="VTSWCAQ"/>
<dbReference type="OrthoDB" id="9781337at2"/>
<dbReference type="PhylomeDB" id="P0A9V1"/>
<dbReference type="BioCyc" id="EcoCyc:YHBG-MONOMER"/>
<dbReference type="BioCyc" id="MetaCyc:YHBG-MONOMER"/>
<dbReference type="BRENDA" id="7.5.2.5">
    <property type="organism ID" value="2026"/>
</dbReference>
<dbReference type="EvolutionaryTrace" id="P0A9V1"/>
<dbReference type="PRO" id="PR:P0A9V1"/>
<dbReference type="Proteomes" id="UP000000625">
    <property type="component" value="Chromosome"/>
</dbReference>
<dbReference type="GO" id="GO:0043190">
    <property type="term" value="C:ATP-binding cassette (ABC) transporter complex"/>
    <property type="evidence" value="ECO:0000314"/>
    <property type="project" value="EcoCyc"/>
</dbReference>
<dbReference type="GO" id="GO:0005737">
    <property type="term" value="C:cytoplasm"/>
    <property type="evidence" value="ECO:0007669"/>
    <property type="project" value="UniProtKB-SubCell"/>
</dbReference>
<dbReference type="GO" id="GO:0016020">
    <property type="term" value="C:membrane"/>
    <property type="evidence" value="ECO:0000303"/>
    <property type="project" value="ComplexPortal"/>
</dbReference>
<dbReference type="GO" id="GO:0005886">
    <property type="term" value="C:plasma membrane"/>
    <property type="evidence" value="ECO:0000314"/>
    <property type="project" value="EcoCyc"/>
</dbReference>
<dbReference type="GO" id="GO:1990351">
    <property type="term" value="C:transporter complex"/>
    <property type="evidence" value="ECO:0000314"/>
    <property type="project" value="EcoCyc"/>
</dbReference>
<dbReference type="GO" id="GO:0005524">
    <property type="term" value="F:ATP binding"/>
    <property type="evidence" value="ECO:0007669"/>
    <property type="project" value="UniProtKB-KW"/>
</dbReference>
<dbReference type="GO" id="GO:0016887">
    <property type="term" value="F:ATP hydrolysis activity"/>
    <property type="evidence" value="ECO:0007669"/>
    <property type="project" value="InterPro"/>
</dbReference>
<dbReference type="GO" id="GO:0043165">
    <property type="term" value="P:Gram-negative-bacterium-type cell outer membrane assembly"/>
    <property type="evidence" value="ECO:0000314"/>
    <property type="project" value="ComplexPortal"/>
</dbReference>
<dbReference type="GO" id="GO:0015920">
    <property type="term" value="P:lipopolysaccharide transport"/>
    <property type="evidence" value="ECO:0000314"/>
    <property type="project" value="ComplexPortal"/>
</dbReference>
<dbReference type="GO" id="GO:0055085">
    <property type="term" value="P:transmembrane transport"/>
    <property type="evidence" value="ECO:0007669"/>
    <property type="project" value="InterPro"/>
</dbReference>
<dbReference type="CDD" id="cd03218">
    <property type="entry name" value="ABC_YhbG"/>
    <property type="match status" value="1"/>
</dbReference>
<dbReference type="FunFam" id="3.40.50.300:FF:000151">
    <property type="entry name" value="Lipopolysaccharide ABC transporter ATP-binding protein"/>
    <property type="match status" value="1"/>
</dbReference>
<dbReference type="Gene3D" id="3.40.50.300">
    <property type="entry name" value="P-loop containing nucleotide triphosphate hydrolases"/>
    <property type="match status" value="1"/>
</dbReference>
<dbReference type="InterPro" id="IPR003593">
    <property type="entry name" value="AAA+_ATPase"/>
</dbReference>
<dbReference type="InterPro" id="IPR051120">
    <property type="entry name" value="ABC_AA/LPS_Transport"/>
</dbReference>
<dbReference type="InterPro" id="IPR003439">
    <property type="entry name" value="ABC_transporter-like_ATP-bd"/>
</dbReference>
<dbReference type="InterPro" id="IPR017871">
    <property type="entry name" value="ABC_transporter-like_CS"/>
</dbReference>
<dbReference type="InterPro" id="IPR032823">
    <property type="entry name" value="BCA_ABC_TP_C"/>
</dbReference>
<dbReference type="InterPro" id="IPR030921">
    <property type="entry name" value="LPS_export_LptB"/>
</dbReference>
<dbReference type="InterPro" id="IPR027417">
    <property type="entry name" value="P-loop_NTPase"/>
</dbReference>
<dbReference type="NCBIfam" id="TIGR04406">
    <property type="entry name" value="LPS_export_lptB"/>
    <property type="match status" value="1"/>
</dbReference>
<dbReference type="NCBIfam" id="NF008144">
    <property type="entry name" value="PRK10895.1"/>
    <property type="match status" value="1"/>
</dbReference>
<dbReference type="PANTHER" id="PTHR45772">
    <property type="entry name" value="CONSERVED COMPONENT OF ABC TRANSPORTER FOR NATURAL AMINO ACIDS-RELATED"/>
    <property type="match status" value="1"/>
</dbReference>
<dbReference type="PANTHER" id="PTHR45772:SF10">
    <property type="entry name" value="LIPOPOLYSACCHARIDE EXPORT SYSTEM ATP-BINDING PROTEIN LPTB"/>
    <property type="match status" value="1"/>
</dbReference>
<dbReference type="Pfam" id="PF00005">
    <property type="entry name" value="ABC_tran"/>
    <property type="match status" value="1"/>
</dbReference>
<dbReference type="Pfam" id="PF12399">
    <property type="entry name" value="BCA_ABC_TP_C"/>
    <property type="match status" value="1"/>
</dbReference>
<dbReference type="SMART" id="SM00382">
    <property type="entry name" value="AAA"/>
    <property type="match status" value="1"/>
</dbReference>
<dbReference type="SUPFAM" id="SSF52540">
    <property type="entry name" value="P-loop containing nucleoside triphosphate hydrolases"/>
    <property type="match status" value="1"/>
</dbReference>
<dbReference type="PROSITE" id="PS00211">
    <property type="entry name" value="ABC_TRANSPORTER_1"/>
    <property type="match status" value="1"/>
</dbReference>
<dbReference type="PROSITE" id="PS50893">
    <property type="entry name" value="ABC_TRANSPORTER_2"/>
    <property type="match status" value="1"/>
</dbReference>
<gene>
    <name type="primary">lptB</name>
    <name type="synonym">yhbG</name>
    <name type="ordered locus">b3201</name>
    <name type="ordered locus">JW3168</name>
</gene>
<evidence type="ECO:0000255" key="1">
    <source>
        <dbReference type="PROSITE-ProRule" id="PRU00434"/>
    </source>
</evidence>
<evidence type="ECO:0000269" key="2">
    <source>
    </source>
</evidence>
<evidence type="ECO:0000269" key="3">
    <source>
    </source>
</evidence>
<evidence type="ECO:0000269" key="4">
    <source>
    </source>
</evidence>
<evidence type="ECO:0000269" key="5">
    <source>
    </source>
</evidence>
<evidence type="ECO:0000269" key="6">
    <source>
    </source>
</evidence>
<evidence type="ECO:0000269" key="7">
    <source>
    </source>
</evidence>
<evidence type="ECO:0000305" key="8"/>
<evidence type="ECO:0007829" key="9">
    <source>
        <dbReference type="PDB" id="4P32"/>
    </source>
</evidence>
<evidence type="ECO:0007829" key="10">
    <source>
        <dbReference type="PDB" id="6MBN"/>
    </source>
</evidence>
<accession>P0A9V1</accession>
<accession>P31220</accession>
<accession>Q2M911</accession>
<protein>
    <recommendedName>
        <fullName>Lipopolysaccharide export system ATP-binding protein LptB</fullName>
        <ecNumber>7.5.2.-</ecNumber>
    </recommendedName>
</protein>
<sequence>MATLTAKNLAKAYKGRRVVEDVSLTVNSGEIVGLLGPNGAGKTTTFYMVVGIVPRDAGNIIIDDDDISLLPLHARARRGIGYLPQEASIFRRLSVYDNLMAVLQIRDDLSAEQREDRANELMEEFHIEHLRDSMGQSLSGGERRRVEIARALAANPKFILLDEPFAGVDPISVIDIKRIIEHLRDSGLGVLITDHNVRETLAVCERAYIVSQGHLIAHGTPTEILQDEHVKRVYLGEDFRL</sequence>
<organism>
    <name type="scientific">Escherichia coli (strain K12)</name>
    <dbReference type="NCBI Taxonomy" id="83333"/>
    <lineage>
        <taxon>Bacteria</taxon>
        <taxon>Pseudomonadati</taxon>
        <taxon>Pseudomonadota</taxon>
        <taxon>Gammaproteobacteria</taxon>
        <taxon>Enterobacterales</taxon>
        <taxon>Enterobacteriaceae</taxon>
        <taxon>Escherichia</taxon>
    </lineage>
</organism>
<reference key="1">
    <citation type="journal article" date="1993" name="J. Bacteriol.">
        <title>Physical map location of the rpoN gene of Escherichia coli.</title>
        <authorList>
            <person name="Imaishi H."/>
            <person name="Gomada M."/>
            <person name="Inouye S."/>
            <person name="Nakazawa A."/>
        </authorList>
    </citation>
    <scope>NUCLEOTIDE SEQUENCE [GENOMIC DNA]</scope>
    <source>
        <strain>K12</strain>
    </source>
</reference>
<reference key="2">
    <citation type="journal article" date="1995" name="J. Biol. Chem.">
        <title>Novel proteins of the phosphotransferase system encoded within the rpoN operon of Escherichia coli. Enzyme IIANtr affects growth on organic nitrogen and the conditional lethality of an erats mutant.</title>
        <authorList>
            <person name="Powell B.S."/>
            <person name="Court D.L."/>
            <person name="Inada T."/>
            <person name="Nakamura Y."/>
            <person name="Michotey V."/>
            <person name="Cui X."/>
            <person name="Reizer A."/>
            <person name="Saier M.H. Jr."/>
            <person name="Reizer J."/>
        </authorList>
    </citation>
    <scope>NUCLEOTIDE SEQUENCE [GENOMIC DNA]</scope>
    <source>
        <strain>K12 / W3110 / ATCC 27325 / DSM 5911</strain>
    </source>
</reference>
<reference key="3">
    <citation type="journal article" date="1997" name="Science">
        <title>The complete genome sequence of Escherichia coli K-12.</title>
        <authorList>
            <person name="Blattner F.R."/>
            <person name="Plunkett G. III"/>
            <person name="Bloch C.A."/>
            <person name="Perna N.T."/>
            <person name="Burland V."/>
            <person name="Riley M."/>
            <person name="Collado-Vides J."/>
            <person name="Glasner J.D."/>
            <person name="Rode C.K."/>
            <person name="Mayhew G.F."/>
            <person name="Gregor J."/>
            <person name="Davis N.W."/>
            <person name="Kirkpatrick H.A."/>
            <person name="Goeden M.A."/>
            <person name="Rose D.J."/>
            <person name="Mau B."/>
            <person name="Shao Y."/>
        </authorList>
    </citation>
    <scope>NUCLEOTIDE SEQUENCE [LARGE SCALE GENOMIC DNA]</scope>
    <source>
        <strain>K12 / MG1655 / ATCC 47076</strain>
    </source>
</reference>
<reference key="4">
    <citation type="journal article" date="2006" name="Mol. Syst. Biol.">
        <title>Highly accurate genome sequences of Escherichia coli K-12 strains MG1655 and W3110.</title>
        <authorList>
            <person name="Hayashi K."/>
            <person name="Morooka N."/>
            <person name="Yamamoto Y."/>
            <person name="Fujita K."/>
            <person name="Isono K."/>
            <person name="Choi S."/>
            <person name="Ohtsubo E."/>
            <person name="Baba T."/>
            <person name="Wanner B.L."/>
            <person name="Mori H."/>
            <person name="Horiuchi T."/>
        </authorList>
    </citation>
    <scope>NUCLEOTIDE SEQUENCE [LARGE SCALE GENOMIC DNA]</scope>
    <source>
        <strain>K12 / W3110 / ATCC 27325 / DSM 5911</strain>
    </source>
</reference>
<reference key="5">
    <citation type="journal article" date="1997" name="Electrophoresis">
        <title>Comparing the predicted and observed properties of proteins encoded in the genome of Escherichia coli K-12.</title>
        <authorList>
            <person name="Link A.J."/>
            <person name="Robison K."/>
            <person name="Church G.M."/>
        </authorList>
    </citation>
    <scope>PROTEIN SEQUENCE OF 2-13</scope>
    <source>
        <strain>K12 / EMG2</strain>
    </source>
</reference>
<reference key="6">
    <citation type="journal article" date="2005" name="J. Biol. Chem.">
        <title>Protein complexes of the Escherichia coli cell envelope.</title>
        <authorList>
            <person name="Stenberg F."/>
            <person name="Chovanec P."/>
            <person name="Maslen S.L."/>
            <person name="Robinson C.V."/>
            <person name="Ilag L."/>
            <person name="von Heijne G."/>
            <person name="Daley D.O."/>
        </authorList>
    </citation>
    <scope>SUBCELLULAR LOCATION</scope>
    <source>
        <strain>BL21-DE3</strain>
    </source>
</reference>
<reference key="7">
    <citation type="journal article" date="2006" name="Res. Microbiol.">
        <title>Non-essential KDO biosynthesis and new essential cell envelope biogenesis genes in the Escherichia coli yrbG-yhbG locus.</title>
        <authorList>
            <person name="Sperandeo P."/>
            <person name="Pozzi C."/>
            <person name="Deho G."/>
            <person name="Polissi A."/>
        </authorList>
    </citation>
    <scope>FUNCTION IN LPS BIOSYNTHESIS</scope>
    <scope>DISRUPTION PHENOTYPE</scope>
</reference>
<reference key="8">
    <citation type="journal article" date="2007" name="J. Bacteriol.">
        <title>Characterization of lptA and lptB, two essential genes implicated in lipopolysaccharide transport to the outer membrane of Escherichia coli.</title>
        <authorList>
            <person name="Sperandeo P."/>
            <person name="Cescutti R."/>
            <person name="Villa R."/>
            <person name="Di Benedetto C."/>
            <person name="Candia D."/>
            <person name="Deho G."/>
            <person name="Polissi A."/>
        </authorList>
    </citation>
    <scope>FUNCTION IN LIPOPOLYSACCHARIDE TRANSPORT</scope>
    <scope>INDUCTION</scope>
</reference>
<reference key="9">
    <citation type="journal article" date="2008" name="J. Bacteriol.">
        <title>Functional analysis of the protein machinery required for transport of lipopolysaccharide to the outer membrane of Escherichia coli.</title>
        <authorList>
            <person name="Sperandeo P."/>
            <person name="Lau F.K."/>
            <person name="Carpentieri A."/>
            <person name="De Castro C."/>
            <person name="Molinaro A."/>
            <person name="Deho G."/>
            <person name="Silhavy T.J."/>
            <person name="Polissi A."/>
        </authorList>
    </citation>
    <scope>FUNCTION IN LIPOPOLYSACCHARIDE TRANSPORT</scope>
    <source>
        <strain>K12 / MC4100 / ATCC 35695 / DSM 6574</strain>
    </source>
</reference>
<reference key="10">
    <citation type="journal article" date="2009" name="FEBS Lett.">
        <title>Biochemical characterization of an ABC transporter LptBFGC complex required for the outer membrane sorting of lipopolysaccharides.</title>
        <authorList>
            <person name="Narita S."/>
            <person name="Tokuda H."/>
        </authorList>
    </citation>
    <scope>SUBUNIT</scope>
    <scope>INTERACTION WITH LPTF AND LPTG</scope>
</reference>